<protein>
    <recommendedName>
        <fullName evidence="10">Transcription factor TCP2</fullName>
    </recommendedName>
    <alternativeName>
        <fullName evidence="10">Protein TEOSINTE-LIKE1, CYCLOIDEA, and PROLIFERATING CELL FACTOR 2</fullName>
    </alternativeName>
</protein>
<dbReference type="EMBL" id="AL021710">
    <property type="protein sequence ID" value="CAA16719.1"/>
    <property type="status" value="ALT_INIT"/>
    <property type="molecule type" value="Genomic_DNA"/>
</dbReference>
<dbReference type="EMBL" id="AL161548">
    <property type="protein sequence ID" value="CAB78841.1"/>
    <property type="status" value="ALT_INIT"/>
    <property type="molecule type" value="Genomic_DNA"/>
</dbReference>
<dbReference type="EMBL" id="CP002687">
    <property type="protein sequence ID" value="AEE84039.1"/>
    <property type="molecule type" value="Genomic_DNA"/>
</dbReference>
<dbReference type="EMBL" id="CP002687">
    <property type="protein sequence ID" value="AEE84040.1"/>
    <property type="molecule type" value="Genomic_DNA"/>
</dbReference>
<dbReference type="EMBL" id="AF367270">
    <property type="protein sequence ID" value="AAK56259.1"/>
    <property type="molecule type" value="mRNA"/>
</dbReference>
<dbReference type="EMBL" id="AF367292">
    <property type="protein sequence ID" value="AAK56280.1"/>
    <property type="molecule type" value="mRNA"/>
</dbReference>
<dbReference type="EMBL" id="AY102141">
    <property type="protein sequence ID" value="AAM26708.1"/>
    <property type="molecule type" value="mRNA"/>
</dbReference>
<dbReference type="EMBL" id="AF072691">
    <property type="protein sequence ID" value="AAC26786.1"/>
    <property type="molecule type" value="mRNA"/>
</dbReference>
<dbReference type="EMBL" id="AY084306">
    <property type="protein sequence ID" value="AAM67351.1"/>
    <property type="molecule type" value="mRNA"/>
</dbReference>
<dbReference type="PIR" id="T04535">
    <property type="entry name" value="T04535"/>
</dbReference>
<dbReference type="PIR" id="T52249">
    <property type="entry name" value="T52249"/>
</dbReference>
<dbReference type="RefSeq" id="NP_001078407.1">
    <property type="nucleotide sequence ID" value="NM_001084938.1"/>
</dbReference>
<dbReference type="RefSeq" id="NP_567553.1">
    <property type="nucleotide sequence ID" value="NM_117950.5"/>
</dbReference>
<dbReference type="SMR" id="Q93V43"/>
<dbReference type="BioGRID" id="12861">
    <property type="interactions" value="160"/>
</dbReference>
<dbReference type="FunCoup" id="Q93V43">
    <property type="interactions" value="758"/>
</dbReference>
<dbReference type="IntAct" id="Q93V43">
    <property type="interactions" value="141"/>
</dbReference>
<dbReference type="STRING" id="3702.Q93V43"/>
<dbReference type="PaxDb" id="3702-AT4G18390.1"/>
<dbReference type="ProteomicsDB" id="234150"/>
<dbReference type="EnsemblPlants" id="AT4G18390.1">
    <property type="protein sequence ID" value="AT4G18390.1"/>
    <property type="gene ID" value="AT4G18390"/>
</dbReference>
<dbReference type="EnsemblPlants" id="AT4G18390.2">
    <property type="protein sequence ID" value="AT4G18390.2"/>
    <property type="gene ID" value="AT4G18390"/>
</dbReference>
<dbReference type="GeneID" id="827568"/>
<dbReference type="Gramene" id="AT4G18390.1">
    <property type="protein sequence ID" value="AT4G18390.1"/>
    <property type="gene ID" value="AT4G18390"/>
</dbReference>
<dbReference type="Gramene" id="AT4G18390.2">
    <property type="protein sequence ID" value="AT4G18390.2"/>
    <property type="gene ID" value="AT4G18390"/>
</dbReference>
<dbReference type="KEGG" id="ath:AT4G18390"/>
<dbReference type="Araport" id="AT4G18390"/>
<dbReference type="TAIR" id="AT4G18390">
    <property type="gene designation" value="TCP2"/>
</dbReference>
<dbReference type="eggNOG" id="ENOG502QQFU">
    <property type="taxonomic scope" value="Eukaryota"/>
</dbReference>
<dbReference type="HOGENOM" id="CLU_036572_0_0_1"/>
<dbReference type="InParanoid" id="Q93V43"/>
<dbReference type="OMA" id="RQWMAPS"/>
<dbReference type="PhylomeDB" id="Q93V43"/>
<dbReference type="PRO" id="PR:Q93V43"/>
<dbReference type="Proteomes" id="UP000006548">
    <property type="component" value="Chromosome 4"/>
</dbReference>
<dbReference type="ExpressionAtlas" id="Q93V43">
    <property type="expression patterns" value="baseline and differential"/>
</dbReference>
<dbReference type="GO" id="GO:0005634">
    <property type="term" value="C:nucleus"/>
    <property type="evidence" value="ECO:0007669"/>
    <property type="project" value="UniProtKB-SubCell"/>
</dbReference>
<dbReference type="GO" id="GO:0003677">
    <property type="term" value="F:DNA binding"/>
    <property type="evidence" value="ECO:0007669"/>
    <property type="project" value="UniProtKB-KW"/>
</dbReference>
<dbReference type="GO" id="GO:0003700">
    <property type="term" value="F:DNA-binding transcription factor activity"/>
    <property type="evidence" value="ECO:0000250"/>
    <property type="project" value="TAIR"/>
</dbReference>
<dbReference type="GO" id="GO:0048366">
    <property type="term" value="P:leaf development"/>
    <property type="evidence" value="ECO:0000315"/>
    <property type="project" value="TAIR"/>
</dbReference>
<dbReference type="GO" id="GO:2000306">
    <property type="term" value="P:positive regulation of photomorphogenesis"/>
    <property type="evidence" value="ECO:0000315"/>
    <property type="project" value="UniProtKB"/>
</dbReference>
<dbReference type="GO" id="GO:0045944">
    <property type="term" value="P:positive regulation of transcription by RNA polymerase II"/>
    <property type="evidence" value="ECO:0000314"/>
    <property type="project" value="UniProtKB"/>
</dbReference>
<dbReference type="GO" id="GO:0006355">
    <property type="term" value="P:regulation of DNA-templated transcription"/>
    <property type="evidence" value="ECO:0000304"/>
    <property type="project" value="TAIR"/>
</dbReference>
<dbReference type="GO" id="GO:0009637">
    <property type="term" value="P:response to blue light"/>
    <property type="evidence" value="ECO:0000270"/>
    <property type="project" value="UniProtKB"/>
</dbReference>
<dbReference type="InterPro" id="IPR017888">
    <property type="entry name" value="CYC/TB1_R_domain"/>
</dbReference>
<dbReference type="InterPro" id="IPR017887">
    <property type="entry name" value="TF_TCP_subgr"/>
</dbReference>
<dbReference type="InterPro" id="IPR005333">
    <property type="entry name" value="Transcription_factor_TCP"/>
</dbReference>
<dbReference type="PANTHER" id="PTHR31072:SF162">
    <property type="entry name" value="TRANSCRIPTION FACTOR TCP2"/>
    <property type="match status" value="1"/>
</dbReference>
<dbReference type="PANTHER" id="PTHR31072">
    <property type="entry name" value="TRANSCRIPTION FACTOR TCP4-RELATED"/>
    <property type="match status" value="1"/>
</dbReference>
<dbReference type="Pfam" id="PF03634">
    <property type="entry name" value="TCP"/>
    <property type="match status" value="1"/>
</dbReference>
<dbReference type="PROSITE" id="PS51370">
    <property type="entry name" value="R"/>
    <property type="match status" value="1"/>
</dbReference>
<dbReference type="PROSITE" id="PS51369">
    <property type="entry name" value="TCP"/>
    <property type="match status" value="1"/>
</dbReference>
<gene>
    <name evidence="10" type="primary">TCP2</name>
    <name evidence="12" type="ordered locus">At4g18390</name>
    <name evidence="13" type="ORF">F28J12.50</name>
</gene>
<proteinExistence type="evidence at protein level"/>
<name>TCP2_ARATH</name>
<keyword id="KW-0217">Developmental protein</keyword>
<keyword id="KW-0238">DNA-binding</keyword>
<keyword id="KW-0539">Nucleus</keyword>
<keyword id="KW-1185">Reference proteome</keyword>
<keyword id="KW-0804">Transcription</keyword>
<keyword id="KW-0805">Transcription regulation</keyword>
<comment type="function">
    <text evidence="5 6 7 9">Plays a pivotal role in the control of morphogenesis of shoot organs by negatively regulating the expression of boundary-specific genes such as CUC genes, probably through the induction of miRNA (e.g. miR164). Participates in ovule development (PubMed:25378179). Promotes light-regulated transcription of CHS, CAB, HYH and HY5. Positively regulates photomorphogenesis (e.g. hypocotyl elongation inhibition and cotyledon opening in response to blue light) (PubMed:26596765).</text>
</comment>
<comment type="subunit">
    <text evidence="7 8 9">Interacts with SPL (PubMed:25378179, PubMed:25527103). Interacts with CRY1 (PubMed:26596765).</text>
</comment>
<comment type="interaction">
    <interactant intactId="EBI-15195035">
        <id>Q93V43</id>
    </interactant>
    <interactant intactId="EBI-44458612">
        <id>Q2NJA6</id>
        <label>AYWB_370</label>
    </interactant>
    <organismsDiffer>true</organismsDiffer>
    <experiments>3</experiments>
</comment>
<comment type="subcellular location">
    <subcellularLocation>
        <location evidence="11">Nucleus</location>
    </subcellularLocation>
</comment>
<comment type="tissue specificity">
    <text evidence="6">Expressed in cotyledons, particularly in the vascular region, in leaves, roots, buds, flowers and immature siliques.</text>
</comment>
<comment type="developmental stage">
    <text evidence="4 7">During flower development, first observed throughout the floral meristem. Later expressed in rapidly growing floral primordia. Detected to a lower extent in vegetative primordia. During flower development, first observed throughout the floral meristem. Expressed during ovule development (PubMed:25378179).</text>
</comment>
<comment type="induction">
    <text evidence="5 9">Repressed by the miRNA miR-JAW (PubMed:12931144). Induced by blue light. Stabilized by light but labile in darkness due to proteasome-dependent proteolysis (at protein level) (PubMed:26596765).</text>
</comment>
<comment type="disruption phenotype">
    <text evidence="9">Reduced light-mediated transcription of CHS, CAB, HYH and HY5. Impaired influence of blue light on hypocotyl elongation.</text>
</comment>
<comment type="sequence caution" evidence="11">
    <conflict type="erroneous initiation">
        <sequence resource="EMBL-CDS" id="CAA16719"/>
    </conflict>
    <text>Truncated N-terminus.</text>
</comment>
<comment type="sequence caution" evidence="11">
    <conflict type="erroneous initiation">
        <sequence resource="EMBL-CDS" id="CAB78841"/>
    </conflict>
    <text>Truncated N-terminus.</text>
</comment>
<accession>Q93V43</accession>
<accession>O49509</accession>
<accession>O81384</accession>
<accession>Q8LGF2</accession>
<sequence>MIGDLMKNNNNGDVVDNEVNNRLSRWHHNSSRIIRVSRASGGKDRHSKVLTSKGPRDRRVRLSVSTALQFYDLQDRLGYDQPSKAVEWLIKAAEDSISELPSLNNTHFPTDDENHQNQTLTTVAANSLSKSACSSNSDTSKNSSGLSLSRSELRDKARERARERTAKETKERDHNHTSFTDLLNSGSDPVNSNRQWMASAPSSSPMEYFSSGLILGSGQQTHFPISTNSHPFSSISDHHHHHPHHQHQEFSFVPDHLISPAESNGGAFNLDFNMSTPSGAGAAVSAASGGGFSGFNRGTLQSNSTNQHQSFLANLQRFPTSESGGGPQFLFGALPAENHHHNHQFQLYYENGCRNSSEHKGKGKN</sequence>
<organism>
    <name type="scientific">Arabidopsis thaliana</name>
    <name type="common">Mouse-ear cress</name>
    <dbReference type="NCBI Taxonomy" id="3702"/>
    <lineage>
        <taxon>Eukaryota</taxon>
        <taxon>Viridiplantae</taxon>
        <taxon>Streptophyta</taxon>
        <taxon>Embryophyta</taxon>
        <taxon>Tracheophyta</taxon>
        <taxon>Spermatophyta</taxon>
        <taxon>Magnoliopsida</taxon>
        <taxon>eudicotyledons</taxon>
        <taxon>Gunneridae</taxon>
        <taxon>Pentapetalae</taxon>
        <taxon>rosids</taxon>
        <taxon>malvids</taxon>
        <taxon>Brassicales</taxon>
        <taxon>Brassicaceae</taxon>
        <taxon>Camelineae</taxon>
        <taxon>Arabidopsis</taxon>
    </lineage>
</organism>
<feature type="chain" id="PRO_0000330776" description="Transcription factor TCP2">
    <location>
        <begin position="1"/>
        <end position="365"/>
    </location>
</feature>
<feature type="domain" description="TCP" evidence="1">
    <location>
        <begin position="42"/>
        <end position="100"/>
    </location>
</feature>
<feature type="domain" description="R" evidence="2">
    <location>
        <begin position="151"/>
        <end position="172"/>
    </location>
</feature>
<feature type="region of interest" description="Disordered" evidence="3">
    <location>
        <begin position="130"/>
        <end position="202"/>
    </location>
</feature>
<feature type="region of interest" description="Disordered" evidence="3">
    <location>
        <begin position="220"/>
        <end position="245"/>
    </location>
</feature>
<feature type="compositionally biased region" description="Low complexity" evidence="3">
    <location>
        <begin position="130"/>
        <end position="150"/>
    </location>
</feature>
<feature type="compositionally biased region" description="Basic and acidic residues" evidence="3">
    <location>
        <begin position="151"/>
        <end position="176"/>
    </location>
</feature>
<feature type="compositionally biased region" description="Polar residues" evidence="3">
    <location>
        <begin position="177"/>
        <end position="202"/>
    </location>
</feature>
<feature type="sequence conflict" description="In Ref. 4; AAC26786." evidence="11" ref="4">
    <original>R</original>
    <variation>S</variation>
    <location>
        <position position="150"/>
    </location>
</feature>
<feature type="sequence conflict" description="In Ref. 4; AAC26786." evidence="11" ref="4">
    <location>
        <begin position="241"/>
        <end position="242"/>
    </location>
</feature>
<feature type="sequence conflict" description="In Ref. 4; AAC26786 and 5; AAM67351." evidence="11" ref="4 5">
    <original>E</original>
    <variation>D</variation>
    <location>
        <position position="358"/>
    </location>
</feature>
<reference key="1">
    <citation type="journal article" date="1999" name="Nature">
        <title>Sequence and analysis of chromosome 4 of the plant Arabidopsis thaliana.</title>
        <authorList>
            <person name="Mayer K.F.X."/>
            <person name="Schueller C."/>
            <person name="Wambutt R."/>
            <person name="Murphy G."/>
            <person name="Volckaert G."/>
            <person name="Pohl T."/>
            <person name="Duesterhoeft A."/>
            <person name="Stiekema W."/>
            <person name="Entian K.-D."/>
            <person name="Terryn N."/>
            <person name="Harris B."/>
            <person name="Ansorge W."/>
            <person name="Brandt P."/>
            <person name="Grivell L.A."/>
            <person name="Rieger M."/>
            <person name="Weichselgartner M."/>
            <person name="de Simone V."/>
            <person name="Obermaier B."/>
            <person name="Mache R."/>
            <person name="Mueller M."/>
            <person name="Kreis M."/>
            <person name="Delseny M."/>
            <person name="Puigdomenech P."/>
            <person name="Watson M."/>
            <person name="Schmidtheini T."/>
            <person name="Reichert B."/>
            <person name="Portetelle D."/>
            <person name="Perez-Alonso M."/>
            <person name="Boutry M."/>
            <person name="Bancroft I."/>
            <person name="Vos P."/>
            <person name="Hoheisel J."/>
            <person name="Zimmermann W."/>
            <person name="Wedler H."/>
            <person name="Ridley P."/>
            <person name="Langham S.-A."/>
            <person name="McCullagh B."/>
            <person name="Bilham L."/>
            <person name="Robben J."/>
            <person name="van der Schueren J."/>
            <person name="Grymonprez B."/>
            <person name="Chuang Y.-J."/>
            <person name="Vandenbussche F."/>
            <person name="Braeken M."/>
            <person name="Weltjens I."/>
            <person name="Voet M."/>
            <person name="Bastiaens I."/>
            <person name="Aert R."/>
            <person name="Defoor E."/>
            <person name="Weitzenegger T."/>
            <person name="Bothe G."/>
            <person name="Ramsperger U."/>
            <person name="Hilbert H."/>
            <person name="Braun M."/>
            <person name="Holzer E."/>
            <person name="Brandt A."/>
            <person name="Peters S."/>
            <person name="van Staveren M."/>
            <person name="Dirkse W."/>
            <person name="Mooijman P."/>
            <person name="Klein Lankhorst R."/>
            <person name="Rose M."/>
            <person name="Hauf J."/>
            <person name="Koetter P."/>
            <person name="Berneiser S."/>
            <person name="Hempel S."/>
            <person name="Feldpausch M."/>
            <person name="Lamberth S."/>
            <person name="Van den Daele H."/>
            <person name="De Keyser A."/>
            <person name="Buysshaert C."/>
            <person name="Gielen J."/>
            <person name="Villarroel R."/>
            <person name="De Clercq R."/>
            <person name="van Montagu M."/>
            <person name="Rogers J."/>
            <person name="Cronin A."/>
            <person name="Quail M.A."/>
            <person name="Bray-Allen S."/>
            <person name="Clark L."/>
            <person name="Doggett J."/>
            <person name="Hall S."/>
            <person name="Kay M."/>
            <person name="Lennard N."/>
            <person name="McLay K."/>
            <person name="Mayes R."/>
            <person name="Pettett A."/>
            <person name="Rajandream M.A."/>
            <person name="Lyne M."/>
            <person name="Benes V."/>
            <person name="Rechmann S."/>
            <person name="Borkova D."/>
            <person name="Bloecker H."/>
            <person name="Scharfe M."/>
            <person name="Grimm M."/>
            <person name="Loehnert T.-H."/>
            <person name="Dose S."/>
            <person name="de Haan M."/>
            <person name="Maarse A.C."/>
            <person name="Schaefer M."/>
            <person name="Mueller-Auer S."/>
            <person name="Gabel C."/>
            <person name="Fuchs M."/>
            <person name="Fartmann B."/>
            <person name="Granderath K."/>
            <person name="Dauner D."/>
            <person name="Herzl A."/>
            <person name="Neumann S."/>
            <person name="Argiriou A."/>
            <person name="Vitale D."/>
            <person name="Liguori R."/>
            <person name="Piravandi E."/>
            <person name="Massenet O."/>
            <person name="Quigley F."/>
            <person name="Clabauld G."/>
            <person name="Muendlein A."/>
            <person name="Felber R."/>
            <person name="Schnabl S."/>
            <person name="Hiller R."/>
            <person name="Schmidt W."/>
            <person name="Lecharny A."/>
            <person name="Aubourg S."/>
            <person name="Chefdor F."/>
            <person name="Cooke R."/>
            <person name="Berger C."/>
            <person name="Monfort A."/>
            <person name="Casacuberta E."/>
            <person name="Gibbons T."/>
            <person name="Weber N."/>
            <person name="Vandenbol M."/>
            <person name="Bargues M."/>
            <person name="Terol J."/>
            <person name="Torres A."/>
            <person name="Perez-Perez A."/>
            <person name="Purnelle B."/>
            <person name="Bent E."/>
            <person name="Johnson S."/>
            <person name="Tacon D."/>
            <person name="Jesse T."/>
            <person name="Heijnen L."/>
            <person name="Schwarz S."/>
            <person name="Scholler P."/>
            <person name="Heber S."/>
            <person name="Francs P."/>
            <person name="Bielke C."/>
            <person name="Frishman D."/>
            <person name="Haase D."/>
            <person name="Lemcke K."/>
            <person name="Mewes H.-W."/>
            <person name="Stocker S."/>
            <person name="Zaccaria P."/>
            <person name="Bevan M."/>
            <person name="Wilson R.K."/>
            <person name="de la Bastide M."/>
            <person name="Habermann K."/>
            <person name="Parnell L."/>
            <person name="Dedhia N."/>
            <person name="Gnoj L."/>
            <person name="Schutz K."/>
            <person name="Huang E."/>
            <person name="Spiegel L."/>
            <person name="Sekhon M."/>
            <person name="Murray J."/>
            <person name="Sheet P."/>
            <person name="Cordes M."/>
            <person name="Abu-Threideh J."/>
            <person name="Stoneking T."/>
            <person name="Kalicki J."/>
            <person name="Graves T."/>
            <person name="Harmon G."/>
            <person name="Edwards J."/>
            <person name="Latreille P."/>
            <person name="Courtney L."/>
            <person name="Cloud J."/>
            <person name="Abbott A."/>
            <person name="Scott K."/>
            <person name="Johnson D."/>
            <person name="Minx P."/>
            <person name="Bentley D."/>
            <person name="Fulton B."/>
            <person name="Miller N."/>
            <person name="Greco T."/>
            <person name="Kemp K."/>
            <person name="Kramer J."/>
            <person name="Fulton L."/>
            <person name="Mardis E."/>
            <person name="Dante M."/>
            <person name="Pepin K."/>
            <person name="Hillier L.W."/>
            <person name="Nelson J."/>
            <person name="Spieth J."/>
            <person name="Ryan E."/>
            <person name="Andrews S."/>
            <person name="Geisel C."/>
            <person name="Layman D."/>
            <person name="Du H."/>
            <person name="Ali J."/>
            <person name="Berghoff A."/>
            <person name="Jones K."/>
            <person name="Drone K."/>
            <person name="Cotton M."/>
            <person name="Joshu C."/>
            <person name="Antonoiu B."/>
            <person name="Zidanic M."/>
            <person name="Strong C."/>
            <person name="Sun H."/>
            <person name="Lamar B."/>
            <person name="Yordan C."/>
            <person name="Ma P."/>
            <person name="Zhong J."/>
            <person name="Preston R."/>
            <person name="Vil D."/>
            <person name="Shekher M."/>
            <person name="Matero A."/>
            <person name="Shah R."/>
            <person name="Swaby I.K."/>
            <person name="O'Shaughnessy A."/>
            <person name="Rodriguez M."/>
            <person name="Hoffman J."/>
            <person name="Till S."/>
            <person name="Granat S."/>
            <person name="Shohdy N."/>
            <person name="Hasegawa A."/>
            <person name="Hameed A."/>
            <person name="Lodhi M."/>
            <person name="Johnson A."/>
            <person name="Chen E."/>
            <person name="Marra M.A."/>
            <person name="Martienssen R."/>
            <person name="McCombie W.R."/>
        </authorList>
    </citation>
    <scope>NUCLEOTIDE SEQUENCE [LARGE SCALE GENOMIC DNA]</scope>
    <source>
        <strain>cv. Columbia</strain>
    </source>
</reference>
<reference key="2">
    <citation type="journal article" date="2017" name="Plant J.">
        <title>Araport11: a complete reannotation of the Arabidopsis thaliana reference genome.</title>
        <authorList>
            <person name="Cheng C.Y."/>
            <person name="Krishnakumar V."/>
            <person name="Chan A.P."/>
            <person name="Thibaud-Nissen F."/>
            <person name="Schobel S."/>
            <person name="Town C.D."/>
        </authorList>
    </citation>
    <scope>GENOME REANNOTATION</scope>
    <source>
        <strain>cv. Columbia</strain>
    </source>
</reference>
<reference key="3">
    <citation type="journal article" date="2003" name="Science">
        <title>Empirical analysis of transcriptional activity in the Arabidopsis genome.</title>
        <authorList>
            <person name="Yamada K."/>
            <person name="Lim J."/>
            <person name="Dale J.M."/>
            <person name="Chen H."/>
            <person name="Shinn P."/>
            <person name="Palm C.J."/>
            <person name="Southwick A.M."/>
            <person name="Wu H.C."/>
            <person name="Kim C.J."/>
            <person name="Nguyen M."/>
            <person name="Pham P.K."/>
            <person name="Cheuk R.F."/>
            <person name="Karlin-Newmann G."/>
            <person name="Liu S.X."/>
            <person name="Lam B."/>
            <person name="Sakano H."/>
            <person name="Wu T."/>
            <person name="Yu G."/>
            <person name="Miranda M."/>
            <person name="Quach H.L."/>
            <person name="Tripp M."/>
            <person name="Chang C.H."/>
            <person name="Lee J.M."/>
            <person name="Toriumi M.J."/>
            <person name="Chan M.M."/>
            <person name="Tang C.C."/>
            <person name="Onodera C.S."/>
            <person name="Deng J.M."/>
            <person name="Akiyama K."/>
            <person name="Ansari Y."/>
            <person name="Arakawa T."/>
            <person name="Banh J."/>
            <person name="Banno F."/>
            <person name="Bowser L."/>
            <person name="Brooks S.Y."/>
            <person name="Carninci P."/>
            <person name="Chao Q."/>
            <person name="Choy N."/>
            <person name="Enju A."/>
            <person name="Goldsmith A.D."/>
            <person name="Gurjal M."/>
            <person name="Hansen N.F."/>
            <person name="Hayashizaki Y."/>
            <person name="Johnson-Hopson C."/>
            <person name="Hsuan V.W."/>
            <person name="Iida K."/>
            <person name="Karnes M."/>
            <person name="Khan S."/>
            <person name="Koesema E."/>
            <person name="Ishida J."/>
            <person name="Jiang P.X."/>
            <person name="Jones T."/>
            <person name="Kawai J."/>
            <person name="Kamiya A."/>
            <person name="Meyers C."/>
            <person name="Nakajima M."/>
            <person name="Narusaka M."/>
            <person name="Seki M."/>
            <person name="Sakurai T."/>
            <person name="Satou M."/>
            <person name="Tamse R."/>
            <person name="Vaysberg M."/>
            <person name="Wallender E.K."/>
            <person name="Wong C."/>
            <person name="Yamamura Y."/>
            <person name="Yuan S."/>
            <person name="Shinozaki K."/>
            <person name="Davis R.W."/>
            <person name="Theologis A."/>
            <person name="Ecker J.R."/>
        </authorList>
    </citation>
    <scope>NUCLEOTIDE SEQUENCE [LARGE SCALE MRNA]</scope>
    <source>
        <strain>cv. Columbia</strain>
    </source>
</reference>
<reference key="4">
    <citation type="submission" date="1998-06" db="EMBL/GenBank/DDBJ databases">
        <title>Arabidopsis EST (Accession R30409) with homology to teosinte branched.</title>
        <authorList>
            <person name="Doebley J."/>
            <person name="Stec A."/>
            <person name="Lauter N."/>
        </authorList>
    </citation>
    <scope>NUCLEOTIDE SEQUENCE [MRNA] OF 29-365</scope>
</reference>
<reference key="5">
    <citation type="submission" date="2002-03" db="EMBL/GenBank/DDBJ databases">
        <title>Full-length cDNA from Arabidopsis thaliana.</title>
        <authorList>
            <person name="Brover V.V."/>
            <person name="Troukhan M.E."/>
            <person name="Alexandrov N.A."/>
            <person name="Lu Y.-P."/>
            <person name="Flavell R.B."/>
            <person name="Feldmann K.A."/>
        </authorList>
    </citation>
    <scope>NUCLEOTIDE SEQUENCE [LARGE SCALE MRNA] OF 192-365</scope>
</reference>
<reference key="6">
    <citation type="journal article" date="1999" name="Plant J.">
        <title>The TCP domain: a motif found in proteins regulating plant growth and development.</title>
        <authorList>
            <person name="Cubas P."/>
            <person name="Lauter N."/>
            <person name="Doebley J."/>
            <person name="Coen E."/>
        </authorList>
    </citation>
    <scope>DEVELOPMENTAL STAGE</scope>
</reference>
<reference key="7">
    <citation type="journal article" date="2003" name="Nature">
        <title>Control of leaf morphogenesis by microRNAs.</title>
        <authorList>
            <person name="Palatnik J.F."/>
            <person name="Allen E."/>
            <person name="Wu X."/>
            <person name="Schommer C."/>
            <person name="Schwab R."/>
            <person name="Carrington J.C."/>
            <person name="Weigel D."/>
        </authorList>
    </citation>
    <scope>FUNCTION</scope>
    <scope>INDUCTION BY MIR-JAW</scope>
</reference>
<reference key="8">
    <citation type="journal article" date="2007" name="Plant Cell">
        <title>Arabidopsis BRANCHED1 acts as an integrator of branching signals within axillary buds.</title>
        <authorList>
            <person name="Aguilar-Martinez J.A."/>
            <person name="Poza-Carrion C."/>
            <person name="Cubas P."/>
        </authorList>
    </citation>
    <scope>GENE FAMILY</scope>
    <scope>NOMENCLATURE</scope>
</reference>
<reference key="9">
    <citation type="journal article" date="2007" name="Plant Cell">
        <title>TCP transcription factors control the morphology of shoot lateral organs via negative regulation of the expression of boundary-specific genes in Arabidopsis.</title>
        <authorList>
            <person name="Koyama T."/>
            <person name="Furutani M."/>
            <person name="Tasaka M."/>
            <person name="Ohme-Takagi M."/>
        </authorList>
    </citation>
    <scope>FUNCTION</scope>
    <scope>TISSUE SPECIFICITY</scope>
</reference>
<reference key="10">
    <citation type="journal article" date="2014" name="J. Genet. Genomics">
        <title>SPOROCYTELESS is a novel embryophyte-specific transcription repressor that interacts with TPL and TCP proteins in Arabidopsis.</title>
        <authorList>
            <person name="Chen G.H."/>
            <person name="Sun J.Y."/>
            <person name="Liu M."/>
            <person name="Liu J."/>
            <person name="Yang W.C."/>
        </authorList>
    </citation>
    <scope>INTERACTION WITH SPL</scope>
</reference>
<reference key="11">
    <citation type="journal article" date="2015" name="Cell Res.">
        <title>The molecular mechanism of sporocyteless/nozzle in controlling Arabidopsis ovule development.</title>
        <authorList>
            <person name="Wei B."/>
            <person name="Zhang J."/>
            <person name="Pang C."/>
            <person name="Yu H."/>
            <person name="Guo D."/>
            <person name="Jiang H."/>
            <person name="Ding M."/>
            <person name="Chen Z."/>
            <person name="Tao Q."/>
            <person name="Gu H."/>
            <person name="Qu L.J."/>
            <person name="Qin G."/>
        </authorList>
    </citation>
    <scope>FUNCTION</scope>
    <scope>INTERACTION WITH SPL</scope>
    <scope>DEVELOPMENTAL STAGE</scope>
</reference>
<reference key="12">
    <citation type="journal article" date="2015" name="J. Exp. Bot.">
        <title>TCP2 positively regulates HY5/HYH and photomorphogenesis in Arabidopsis.</title>
        <authorList>
            <person name="He Z."/>
            <person name="Zhao X."/>
            <person name="Kong F."/>
            <person name="Zuo Z."/>
            <person name="Liu X."/>
        </authorList>
    </citation>
    <scope>FUNCTION</scope>
    <scope>DISRUPTION PHENOTYPE</scope>
    <scope>INTERACTION WITH CRY1</scope>
    <scope>INDUCTION BY BLUE LIGHT</scope>
    <source>
        <strain>cv. Columbia</strain>
    </source>
</reference>
<evidence type="ECO:0000255" key="1">
    <source>
        <dbReference type="PROSITE-ProRule" id="PRU00701"/>
    </source>
</evidence>
<evidence type="ECO:0000255" key="2">
    <source>
        <dbReference type="PROSITE-ProRule" id="PRU00702"/>
    </source>
</evidence>
<evidence type="ECO:0000256" key="3">
    <source>
        <dbReference type="SAM" id="MobiDB-lite"/>
    </source>
</evidence>
<evidence type="ECO:0000269" key="4">
    <source>
    </source>
</evidence>
<evidence type="ECO:0000269" key="5">
    <source>
    </source>
</evidence>
<evidence type="ECO:0000269" key="6">
    <source>
    </source>
</evidence>
<evidence type="ECO:0000269" key="7">
    <source>
    </source>
</evidence>
<evidence type="ECO:0000269" key="8">
    <source>
    </source>
</evidence>
<evidence type="ECO:0000269" key="9">
    <source>
    </source>
</evidence>
<evidence type="ECO:0000303" key="10">
    <source>
    </source>
</evidence>
<evidence type="ECO:0000305" key="11"/>
<evidence type="ECO:0000312" key="12">
    <source>
        <dbReference type="Araport" id="AT4G18390"/>
    </source>
</evidence>
<evidence type="ECO:0000312" key="13">
    <source>
        <dbReference type="EMBL" id="CAA16719.1"/>
    </source>
</evidence>